<dbReference type="EMBL" id="AE017180">
    <property type="protein sequence ID" value="AAR36245.1"/>
    <property type="molecule type" value="Genomic_DNA"/>
</dbReference>
<dbReference type="RefSeq" id="NP_953895.1">
    <property type="nucleotide sequence ID" value="NC_002939.5"/>
</dbReference>
<dbReference type="RefSeq" id="WP_010943481.1">
    <property type="nucleotide sequence ID" value="NC_002939.5"/>
</dbReference>
<dbReference type="SMR" id="Q748Z3"/>
<dbReference type="FunCoup" id="Q748Z3">
    <property type="interactions" value="606"/>
</dbReference>
<dbReference type="STRING" id="243231.GSU2852"/>
<dbReference type="EnsemblBacteria" id="AAR36245">
    <property type="protein sequence ID" value="AAR36245"/>
    <property type="gene ID" value="GSU2852"/>
</dbReference>
<dbReference type="KEGG" id="gsu:GSU2852"/>
<dbReference type="PATRIC" id="fig|243231.5.peg.2878"/>
<dbReference type="eggNOG" id="COG0091">
    <property type="taxonomic scope" value="Bacteria"/>
</dbReference>
<dbReference type="HOGENOM" id="CLU_083987_3_3_7"/>
<dbReference type="InParanoid" id="Q748Z3"/>
<dbReference type="OrthoDB" id="9805969at2"/>
<dbReference type="Proteomes" id="UP000000577">
    <property type="component" value="Chromosome"/>
</dbReference>
<dbReference type="GO" id="GO:0022625">
    <property type="term" value="C:cytosolic large ribosomal subunit"/>
    <property type="evidence" value="ECO:0000318"/>
    <property type="project" value="GO_Central"/>
</dbReference>
<dbReference type="GO" id="GO:0019843">
    <property type="term" value="F:rRNA binding"/>
    <property type="evidence" value="ECO:0007669"/>
    <property type="project" value="UniProtKB-UniRule"/>
</dbReference>
<dbReference type="GO" id="GO:0003735">
    <property type="term" value="F:structural constituent of ribosome"/>
    <property type="evidence" value="ECO:0000318"/>
    <property type="project" value="GO_Central"/>
</dbReference>
<dbReference type="GO" id="GO:0006412">
    <property type="term" value="P:translation"/>
    <property type="evidence" value="ECO:0000318"/>
    <property type="project" value="GO_Central"/>
</dbReference>
<dbReference type="CDD" id="cd00336">
    <property type="entry name" value="Ribosomal_L22"/>
    <property type="match status" value="1"/>
</dbReference>
<dbReference type="FunFam" id="3.90.470.10:FF:000011">
    <property type="entry name" value="50S ribosomal protein L22"/>
    <property type="match status" value="1"/>
</dbReference>
<dbReference type="Gene3D" id="3.90.470.10">
    <property type="entry name" value="Ribosomal protein L22/L17"/>
    <property type="match status" value="1"/>
</dbReference>
<dbReference type="HAMAP" id="MF_01331_B">
    <property type="entry name" value="Ribosomal_uL22_B"/>
    <property type="match status" value="1"/>
</dbReference>
<dbReference type="InterPro" id="IPR001063">
    <property type="entry name" value="Ribosomal_uL22"/>
</dbReference>
<dbReference type="InterPro" id="IPR005727">
    <property type="entry name" value="Ribosomal_uL22_bac/chlpt-type"/>
</dbReference>
<dbReference type="InterPro" id="IPR047867">
    <property type="entry name" value="Ribosomal_uL22_bac/org-type"/>
</dbReference>
<dbReference type="InterPro" id="IPR018260">
    <property type="entry name" value="Ribosomal_uL22_CS"/>
</dbReference>
<dbReference type="InterPro" id="IPR036394">
    <property type="entry name" value="Ribosomal_uL22_sf"/>
</dbReference>
<dbReference type="NCBIfam" id="TIGR01044">
    <property type="entry name" value="rplV_bact"/>
    <property type="match status" value="1"/>
</dbReference>
<dbReference type="PANTHER" id="PTHR13501">
    <property type="entry name" value="CHLOROPLAST 50S RIBOSOMAL PROTEIN L22-RELATED"/>
    <property type="match status" value="1"/>
</dbReference>
<dbReference type="PANTHER" id="PTHR13501:SF8">
    <property type="entry name" value="LARGE RIBOSOMAL SUBUNIT PROTEIN UL22M"/>
    <property type="match status" value="1"/>
</dbReference>
<dbReference type="Pfam" id="PF00237">
    <property type="entry name" value="Ribosomal_L22"/>
    <property type="match status" value="1"/>
</dbReference>
<dbReference type="SUPFAM" id="SSF54843">
    <property type="entry name" value="Ribosomal protein L22"/>
    <property type="match status" value="1"/>
</dbReference>
<dbReference type="PROSITE" id="PS00464">
    <property type="entry name" value="RIBOSOMAL_L22"/>
    <property type="match status" value="1"/>
</dbReference>
<name>RL22_GEOSL</name>
<proteinExistence type="inferred from homology"/>
<gene>
    <name evidence="1" type="primary">rplV</name>
    <name type="ordered locus">GSU2852</name>
</gene>
<organism>
    <name type="scientific">Geobacter sulfurreducens (strain ATCC 51573 / DSM 12127 / PCA)</name>
    <dbReference type="NCBI Taxonomy" id="243231"/>
    <lineage>
        <taxon>Bacteria</taxon>
        <taxon>Pseudomonadati</taxon>
        <taxon>Thermodesulfobacteriota</taxon>
        <taxon>Desulfuromonadia</taxon>
        <taxon>Geobacterales</taxon>
        <taxon>Geobacteraceae</taxon>
        <taxon>Geobacter</taxon>
    </lineage>
</organism>
<reference key="1">
    <citation type="journal article" date="2003" name="Science">
        <title>Genome of Geobacter sulfurreducens: metal reduction in subsurface environments.</title>
        <authorList>
            <person name="Methe B.A."/>
            <person name="Nelson K.E."/>
            <person name="Eisen J.A."/>
            <person name="Paulsen I.T."/>
            <person name="Nelson W.C."/>
            <person name="Heidelberg J.F."/>
            <person name="Wu D."/>
            <person name="Wu M."/>
            <person name="Ward N.L."/>
            <person name="Beanan M.J."/>
            <person name="Dodson R.J."/>
            <person name="Madupu R."/>
            <person name="Brinkac L.M."/>
            <person name="Daugherty S.C."/>
            <person name="DeBoy R.T."/>
            <person name="Durkin A.S."/>
            <person name="Gwinn M.L."/>
            <person name="Kolonay J.F."/>
            <person name="Sullivan S.A."/>
            <person name="Haft D.H."/>
            <person name="Selengut J."/>
            <person name="Davidsen T.M."/>
            <person name="Zafar N."/>
            <person name="White O."/>
            <person name="Tran B."/>
            <person name="Romero C."/>
            <person name="Forberger H.A."/>
            <person name="Weidman J.F."/>
            <person name="Khouri H.M."/>
            <person name="Feldblyum T.V."/>
            <person name="Utterback T.R."/>
            <person name="Van Aken S.E."/>
            <person name="Lovley D.R."/>
            <person name="Fraser C.M."/>
        </authorList>
    </citation>
    <scope>NUCLEOTIDE SEQUENCE [LARGE SCALE GENOMIC DNA]</scope>
    <source>
        <strain>ATCC 51573 / DSM 12127 / PCA</strain>
    </source>
</reference>
<keyword id="KW-1185">Reference proteome</keyword>
<keyword id="KW-0687">Ribonucleoprotein</keyword>
<keyword id="KW-0689">Ribosomal protein</keyword>
<keyword id="KW-0694">RNA-binding</keyword>
<keyword id="KW-0699">rRNA-binding</keyword>
<comment type="function">
    <text evidence="1">This protein binds specifically to 23S rRNA; its binding is stimulated by other ribosomal proteins, e.g. L4, L17, and L20. It is important during the early stages of 50S assembly. It makes multiple contacts with different domains of the 23S rRNA in the assembled 50S subunit and ribosome (By similarity).</text>
</comment>
<comment type="function">
    <text evidence="1">The globular domain of the protein is located near the polypeptide exit tunnel on the outside of the subunit, while an extended beta-hairpin is found that lines the wall of the exit tunnel in the center of the 70S ribosome.</text>
</comment>
<comment type="subunit">
    <text evidence="1">Part of the 50S ribosomal subunit.</text>
</comment>
<comment type="similarity">
    <text evidence="1">Belongs to the universal ribosomal protein uL22 family.</text>
</comment>
<evidence type="ECO:0000255" key="1">
    <source>
        <dbReference type="HAMAP-Rule" id="MF_01331"/>
    </source>
</evidence>
<evidence type="ECO:0000305" key="2"/>
<accession>Q748Z3</accession>
<feature type="chain" id="PRO_0000125158" description="Large ribosomal subunit protein uL22">
    <location>
        <begin position="1"/>
        <end position="111"/>
    </location>
</feature>
<sequence>MEASAKLTFARLSPRKTRLVVDMVRGKGIQDALTILRFSPQASAKLVSKLLRSAVANAEQKGASDVDRLYVKSISVDGGPVLKRFVPRAMGRASKIRKPTSHITVVLADKQ</sequence>
<protein>
    <recommendedName>
        <fullName evidence="1">Large ribosomal subunit protein uL22</fullName>
    </recommendedName>
    <alternativeName>
        <fullName evidence="2">50S ribosomal protein L22</fullName>
    </alternativeName>
</protein>